<gene>
    <name evidence="1" type="primary">tatC</name>
    <name type="ordered locus">lin0380</name>
</gene>
<accession>Q92ES8</accession>
<name>TATC_LISIN</name>
<evidence type="ECO:0000255" key="1">
    <source>
        <dbReference type="HAMAP-Rule" id="MF_00902"/>
    </source>
</evidence>
<organism>
    <name type="scientific">Listeria innocua serovar 6a (strain ATCC BAA-680 / CLIP 11262)</name>
    <dbReference type="NCBI Taxonomy" id="272626"/>
    <lineage>
        <taxon>Bacteria</taxon>
        <taxon>Bacillati</taxon>
        <taxon>Bacillota</taxon>
        <taxon>Bacilli</taxon>
        <taxon>Bacillales</taxon>
        <taxon>Listeriaceae</taxon>
        <taxon>Listeria</taxon>
    </lineage>
</organism>
<sequence length="247" mass="28441">MTEVSMSLTGHLKELRTRLLIILLSFFLAFFVGLFVSKPLILFLQKDDLPKEVILHVFKVTDAFQIYIEMAFIIGLILVFPVILYQLWAFVKPGLHASEQRITLRYIPITFLLFLCGVVFSYVITFPFILKFMFQFAAELGVETTIGLATYFQFLLQIVLSFGVLFELPMVIMLLTRLSLITPNGMRRARKYAYFCLLIIAAFIAPPEILSHLMITIPLIGLYEISIVVSGFTVRRMDKEMNMKKML</sequence>
<keyword id="KW-1003">Cell membrane</keyword>
<keyword id="KW-0472">Membrane</keyword>
<keyword id="KW-0653">Protein transport</keyword>
<keyword id="KW-0811">Translocation</keyword>
<keyword id="KW-0812">Transmembrane</keyword>
<keyword id="KW-1133">Transmembrane helix</keyword>
<keyword id="KW-0813">Transport</keyword>
<proteinExistence type="inferred from homology"/>
<comment type="function">
    <text evidence="1">Part of the twin-arginine translocation (Tat) system that transports large folded proteins containing a characteristic twin-arginine motif in their signal peptide across membranes.</text>
</comment>
<comment type="subunit">
    <text evidence="1">Forms a complex with TatA.</text>
</comment>
<comment type="subcellular location">
    <subcellularLocation>
        <location evidence="1">Cell membrane</location>
        <topology evidence="1">Multi-pass membrane protein</topology>
    </subcellularLocation>
</comment>
<comment type="similarity">
    <text evidence="1">Belongs to the TatC family.</text>
</comment>
<feature type="chain" id="PRO_0000412867" description="Sec-independent protein translocase protein TatC">
    <location>
        <begin position="1"/>
        <end position="247"/>
    </location>
</feature>
<feature type="transmembrane region" description="Helical" evidence="1">
    <location>
        <begin position="21"/>
        <end position="41"/>
    </location>
</feature>
<feature type="transmembrane region" description="Helical" evidence="1">
    <location>
        <begin position="71"/>
        <end position="91"/>
    </location>
</feature>
<feature type="transmembrane region" description="Helical" evidence="1">
    <location>
        <begin position="109"/>
        <end position="129"/>
    </location>
</feature>
<feature type="transmembrane region" description="Helical" evidence="1">
    <location>
        <begin position="154"/>
        <end position="174"/>
    </location>
</feature>
<feature type="transmembrane region" description="Helical" evidence="1">
    <location>
        <begin position="195"/>
        <end position="215"/>
    </location>
</feature>
<dbReference type="EMBL" id="AL596164">
    <property type="protein sequence ID" value="CAC95613.1"/>
    <property type="molecule type" value="Genomic_DNA"/>
</dbReference>
<dbReference type="PIR" id="AE1480">
    <property type="entry name" value="AE1480"/>
</dbReference>
<dbReference type="RefSeq" id="WP_010990369.1">
    <property type="nucleotide sequence ID" value="NC_003212.1"/>
</dbReference>
<dbReference type="SMR" id="Q92ES8"/>
<dbReference type="STRING" id="272626.gene:17564707"/>
<dbReference type="GeneID" id="93233830"/>
<dbReference type="KEGG" id="lin:lin0380"/>
<dbReference type="eggNOG" id="COG0805">
    <property type="taxonomic scope" value="Bacteria"/>
</dbReference>
<dbReference type="HOGENOM" id="CLU_031942_3_1_9"/>
<dbReference type="OrthoDB" id="9777044at2"/>
<dbReference type="Proteomes" id="UP000002513">
    <property type="component" value="Chromosome"/>
</dbReference>
<dbReference type="GO" id="GO:0033281">
    <property type="term" value="C:TAT protein transport complex"/>
    <property type="evidence" value="ECO:0007669"/>
    <property type="project" value="UniProtKB-UniRule"/>
</dbReference>
<dbReference type="GO" id="GO:0009977">
    <property type="term" value="F:proton motive force dependent protein transmembrane transporter activity"/>
    <property type="evidence" value="ECO:0007669"/>
    <property type="project" value="TreeGrafter"/>
</dbReference>
<dbReference type="GO" id="GO:0065002">
    <property type="term" value="P:intracellular protein transmembrane transport"/>
    <property type="evidence" value="ECO:0007669"/>
    <property type="project" value="TreeGrafter"/>
</dbReference>
<dbReference type="GO" id="GO:0043953">
    <property type="term" value="P:protein transport by the Tat complex"/>
    <property type="evidence" value="ECO:0007669"/>
    <property type="project" value="UniProtKB-UniRule"/>
</dbReference>
<dbReference type="HAMAP" id="MF_00902">
    <property type="entry name" value="TatC"/>
    <property type="match status" value="1"/>
</dbReference>
<dbReference type="InterPro" id="IPR019820">
    <property type="entry name" value="Sec-indep_translocase_CS"/>
</dbReference>
<dbReference type="InterPro" id="IPR002033">
    <property type="entry name" value="TatC"/>
</dbReference>
<dbReference type="NCBIfam" id="TIGR00945">
    <property type="entry name" value="tatC"/>
    <property type="match status" value="1"/>
</dbReference>
<dbReference type="PANTHER" id="PTHR30371">
    <property type="entry name" value="SEC-INDEPENDENT PROTEIN TRANSLOCASE PROTEIN TATC"/>
    <property type="match status" value="1"/>
</dbReference>
<dbReference type="PANTHER" id="PTHR30371:SF0">
    <property type="entry name" value="SEC-INDEPENDENT PROTEIN TRANSLOCASE PROTEIN TATC, CHLOROPLASTIC-RELATED"/>
    <property type="match status" value="1"/>
</dbReference>
<dbReference type="Pfam" id="PF00902">
    <property type="entry name" value="TatC"/>
    <property type="match status" value="1"/>
</dbReference>
<dbReference type="PRINTS" id="PR01840">
    <property type="entry name" value="TATCFAMILY"/>
</dbReference>
<dbReference type="PROSITE" id="PS01218">
    <property type="entry name" value="TATC"/>
    <property type="match status" value="1"/>
</dbReference>
<protein>
    <recommendedName>
        <fullName evidence="1">Sec-independent protein translocase protein TatC</fullName>
    </recommendedName>
</protein>
<reference key="1">
    <citation type="journal article" date="2001" name="Science">
        <title>Comparative genomics of Listeria species.</title>
        <authorList>
            <person name="Glaser P."/>
            <person name="Frangeul L."/>
            <person name="Buchrieser C."/>
            <person name="Rusniok C."/>
            <person name="Amend A."/>
            <person name="Baquero F."/>
            <person name="Berche P."/>
            <person name="Bloecker H."/>
            <person name="Brandt P."/>
            <person name="Chakraborty T."/>
            <person name="Charbit A."/>
            <person name="Chetouani F."/>
            <person name="Couve E."/>
            <person name="de Daruvar A."/>
            <person name="Dehoux P."/>
            <person name="Domann E."/>
            <person name="Dominguez-Bernal G."/>
            <person name="Duchaud E."/>
            <person name="Durant L."/>
            <person name="Dussurget O."/>
            <person name="Entian K.-D."/>
            <person name="Fsihi H."/>
            <person name="Garcia-del Portillo F."/>
            <person name="Garrido P."/>
            <person name="Gautier L."/>
            <person name="Goebel W."/>
            <person name="Gomez-Lopez N."/>
            <person name="Hain T."/>
            <person name="Hauf J."/>
            <person name="Jackson D."/>
            <person name="Jones L.-M."/>
            <person name="Kaerst U."/>
            <person name="Kreft J."/>
            <person name="Kuhn M."/>
            <person name="Kunst F."/>
            <person name="Kurapkat G."/>
            <person name="Madueno E."/>
            <person name="Maitournam A."/>
            <person name="Mata Vicente J."/>
            <person name="Ng E."/>
            <person name="Nedjari H."/>
            <person name="Nordsiek G."/>
            <person name="Novella S."/>
            <person name="de Pablos B."/>
            <person name="Perez-Diaz J.-C."/>
            <person name="Purcell R."/>
            <person name="Remmel B."/>
            <person name="Rose M."/>
            <person name="Schlueter T."/>
            <person name="Simoes N."/>
            <person name="Tierrez A."/>
            <person name="Vazquez-Boland J.-A."/>
            <person name="Voss H."/>
            <person name="Wehland J."/>
            <person name="Cossart P."/>
        </authorList>
    </citation>
    <scope>NUCLEOTIDE SEQUENCE [LARGE SCALE GENOMIC DNA]</scope>
    <source>
        <strain>ATCC BAA-680 / CLIP 11262</strain>
    </source>
</reference>